<feature type="chain" id="PRO_0000460870" description="Chitin synthase A">
    <location>
        <begin position="1"/>
        <end position="1760"/>
    </location>
</feature>
<feature type="transmembrane region" description="Helical" evidence="1">
    <location>
        <begin position="729"/>
        <end position="749"/>
    </location>
</feature>
<feature type="transmembrane region" description="Helical" evidence="1">
    <location>
        <begin position="765"/>
        <end position="785"/>
    </location>
</feature>
<feature type="transmembrane region" description="Helical" evidence="1">
    <location>
        <begin position="1027"/>
        <end position="1047"/>
    </location>
</feature>
<feature type="transmembrane region" description="Helical" evidence="1">
    <location>
        <begin position="1417"/>
        <end position="1437"/>
    </location>
</feature>
<feature type="transmembrane region" description="Helical" evidence="1">
    <location>
        <begin position="1449"/>
        <end position="1469"/>
    </location>
</feature>
<feature type="transmembrane region" description="Helical" evidence="1">
    <location>
        <begin position="1477"/>
        <end position="1497"/>
    </location>
</feature>
<feature type="domain" description="DEK-C" evidence="3">
    <location>
        <begin position="1702"/>
        <end position="1758"/>
    </location>
</feature>
<feature type="region of interest" description="Disordered" evidence="4">
    <location>
        <begin position="1670"/>
        <end position="1691"/>
    </location>
</feature>
<feature type="glycosylation site" description="N-linked (GlcNAc...) asparagine" evidence="2">
    <location>
        <position position="157"/>
    </location>
</feature>
<feature type="glycosylation site" description="N-linked (GlcNAc...) asparagine" evidence="2">
    <location>
        <position position="876"/>
    </location>
</feature>
<feature type="glycosylation site" description="N-linked (GlcNAc...) asparagine" evidence="2">
    <location>
        <position position="996"/>
    </location>
</feature>
<feature type="glycosylation site" description="N-linked (GlcNAc...) asparagine" evidence="2">
    <location>
        <position position="1392"/>
    </location>
</feature>
<feature type="glycosylation site" description="N-linked (GlcNAc...) asparagine" evidence="2">
    <location>
        <position position="1557"/>
    </location>
</feature>
<feature type="glycosylation site" description="N-linked (GlcNAc...) asparagine" evidence="2">
    <location>
        <position position="1645"/>
    </location>
</feature>
<feature type="glycosylation site" description="N-linked (GlcNAc...) asparagine" evidence="2">
    <location>
        <position position="1650"/>
    </location>
</feature>
<evidence type="ECO:0000255" key="1"/>
<evidence type="ECO:0000255" key="2">
    <source>
        <dbReference type="PROSITE-ProRule" id="PRU00498"/>
    </source>
</evidence>
<evidence type="ECO:0000255" key="3">
    <source>
        <dbReference type="PROSITE-ProRule" id="PRU01342"/>
    </source>
</evidence>
<evidence type="ECO:0000256" key="4">
    <source>
        <dbReference type="SAM" id="MobiDB-lite"/>
    </source>
</evidence>
<evidence type="ECO:0000269" key="5">
    <source>
    </source>
</evidence>
<evidence type="ECO:0000269" key="6">
    <source>
    </source>
</evidence>
<evidence type="ECO:0000269" key="7">
    <source>
    </source>
</evidence>
<evidence type="ECO:0000269" key="8">
    <source>
    </source>
</evidence>
<evidence type="ECO:0000303" key="9">
    <source>
    </source>
</evidence>
<evidence type="ECO:0000303" key="10">
    <source>
    </source>
</evidence>
<evidence type="ECO:0000305" key="11"/>
<evidence type="ECO:0000305" key="12">
    <source>
    </source>
</evidence>
<organism>
    <name type="scientific">Aspergillus oryzae (strain ATCC 42149 / RIB 40)</name>
    <name type="common">Yellow koji mold</name>
    <dbReference type="NCBI Taxonomy" id="510516"/>
    <lineage>
        <taxon>Eukaryota</taxon>
        <taxon>Fungi</taxon>
        <taxon>Dikarya</taxon>
        <taxon>Ascomycota</taxon>
        <taxon>Pezizomycotina</taxon>
        <taxon>Eurotiomycetes</taxon>
        <taxon>Eurotiomycetidae</taxon>
        <taxon>Eurotiales</taxon>
        <taxon>Aspergillaceae</taxon>
        <taxon>Aspergillus</taxon>
        <taxon>Aspergillus subgen. Circumdati</taxon>
    </lineage>
</organism>
<name>CHSA_ASPOR</name>
<proteinExistence type="evidence at transcript level"/>
<reference key="1">
    <citation type="journal article" date="2005" name="Nature">
        <title>Genome sequencing and analysis of Aspergillus oryzae.</title>
        <authorList>
            <person name="Machida M."/>
            <person name="Asai K."/>
            <person name="Sano M."/>
            <person name="Tanaka T."/>
            <person name="Kumagai T."/>
            <person name="Terai G."/>
            <person name="Kusumoto K."/>
            <person name="Arima T."/>
            <person name="Akita O."/>
            <person name="Kashiwagi Y."/>
            <person name="Abe K."/>
            <person name="Gomi K."/>
            <person name="Horiuchi H."/>
            <person name="Kitamoto K."/>
            <person name="Kobayashi T."/>
            <person name="Takeuchi M."/>
            <person name="Denning D.W."/>
            <person name="Galagan J.E."/>
            <person name="Nierman W.C."/>
            <person name="Yu J."/>
            <person name="Archer D.B."/>
            <person name="Bennett J.W."/>
            <person name="Bhatnagar D."/>
            <person name="Cleveland T.E."/>
            <person name="Fedorova N.D."/>
            <person name="Gotoh O."/>
            <person name="Horikawa H."/>
            <person name="Hosoyama A."/>
            <person name="Ichinomiya M."/>
            <person name="Igarashi R."/>
            <person name="Iwashita K."/>
            <person name="Juvvadi P.R."/>
            <person name="Kato M."/>
            <person name="Kato Y."/>
            <person name="Kin T."/>
            <person name="Kokubun A."/>
            <person name="Maeda H."/>
            <person name="Maeyama N."/>
            <person name="Maruyama J."/>
            <person name="Nagasaki H."/>
            <person name="Nakajima T."/>
            <person name="Oda K."/>
            <person name="Okada K."/>
            <person name="Paulsen I."/>
            <person name="Sakamoto K."/>
            <person name="Sawano T."/>
            <person name="Takahashi M."/>
            <person name="Takase K."/>
            <person name="Terabayashi Y."/>
            <person name="Wortman J.R."/>
            <person name="Yamada O."/>
            <person name="Yamagata Y."/>
            <person name="Anazawa H."/>
            <person name="Hata Y."/>
            <person name="Koide Y."/>
            <person name="Komori T."/>
            <person name="Koyama Y."/>
            <person name="Minetoki T."/>
            <person name="Suharnan S."/>
            <person name="Tanaka A."/>
            <person name="Isono K."/>
            <person name="Kuhara S."/>
            <person name="Ogasawara N."/>
            <person name="Kikuchi H."/>
        </authorList>
    </citation>
    <scope>NUCLEOTIDE SEQUENCE [LARGE SCALE GENOMIC DNA]</scope>
    <source>
        <strain>ATCC 42149 / RIB 40</strain>
    </source>
</reference>
<reference key="2">
    <citation type="journal article" date="2002" name="Curr. Genet.">
        <title>chsZ, a gene for a novel class of chitin synthase from Aspergillus oryzae.</title>
        <authorList>
            <person name="Chigira Y."/>
            <person name="Abe K."/>
            <person name="Gomi K."/>
            <person name="Nakajima T."/>
        </authorList>
    </citation>
    <scope>FUNCTION</scope>
    <scope>INDUCTION</scope>
</reference>
<reference key="3">
    <citation type="journal article" date="2002" name="Microbiology">
        <title>Altering the expression of two chitin synthase genes differentially affects the growth and morphology of Aspergillus oryzae.</title>
        <authorList>
            <person name="Mueller C."/>
            <person name="Hjort C.M."/>
            <person name="Hansen K."/>
            <person name="Nielsen J."/>
        </authorList>
    </citation>
    <scope>FUNCTION</scope>
    <scope>DISRUPTION PHENOTYPE</scope>
    <scope>INDUCTION</scope>
</reference>
<reference key="4">
    <citation type="journal article" date="2002" name="Appl. Environ. Microbiol.">
        <title>Metabolic engineering of the morphology of Aspergillus oryzae by altering chitin synthesis.</title>
        <authorList>
            <person name="Mueller C."/>
            <person name="McIntyre M."/>
            <person name="Hansen K."/>
            <person name="Nielsen J."/>
        </authorList>
    </citation>
    <scope>FUNCTION</scope>
    <scope>DISRUPTION PHENOTYPE</scope>
</reference>
<reference key="5">
    <citation type="journal article" date="2003" name="Biotechnol. Bioeng.">
        <title>Effect of deletion of chitin synthase genes on mycelial morphology and culture viscosity in Aspergillus oryzae.</title>
        <authorList>
            <person name="Mueller C."/>
            <person name="Hansen K."/>
            <person name="Szabo P."/>
            <person name="Nielsen J."/>
        </authorList>
    </citation>
    <scope>FUNCTION</scope>
    <scope>DISRUPTION PHENOTYPE</scope>
</reference>
<comment type="function">
    <text evidence="5 6 7 8 12">Polymerizes chitin, a structural polymer of the cell wall and septum, by transferring the sugar moiety of UDP-GlcNAc to the non-reducing end of the growing chitin polymer (Probable). Plays an important role in cell-wall formation during both hyphal growth and conidiation (PubMed:11916702, PubMed:12172967, PubMed:12480906, PubMed:12514801).</text>
</comment>
<comment type="catalytic activity">
    <reaction evidence="12">
        <text>[(1-&gt;4)-N-acetyl-beta-D-glucosaminyl](n) + UDP-N-acetyl-alpha-D-glucosamine = [(1-&gt;4)-N-acetyl-beta-D-glucosaminyl](n+1) + UDP + H(+)</text>
        <dbReference type="Rhea" id="RHEA:16637"/>
        <dbReference type="Rhea" id="RHEA-COMP:9593"/>
        <dbReference type="Rhea" id="RHEA-COMP:9595"/>
        <dbReference type="ChEBI" id="CHEBI:15378"/>
        <dbReference type="ChEBI" id="CHEBI:17029"/>
        <dbReference type="ChEBI" id="CHEBI:57705"/>
        <dbReference type="ChEBI" id="CHEBI:58223"/>
        <dbReference type="EC" id="2.4.1.16"/>
    </reaction>
    <physiologicalReaction direction="left-to-right" evidence="12">
        <dbReference type="Rhea" id="RHEA:16638"/>
    </physiologicalReaction>
</comment>
<comment type="subcellular location">
    <subcellularLocation>
        <location evidence="11">Cell membrane</location>
        <topology evidence="1">Multi-pass membrane protein</topology>
    </subcellularLocation>
</comment>
<comment type="induction">
    <text evidence="6 7">Expressed during exponential growth.</text>
</comment>
<comment type="disruption phenotype">
    <text evidence="5 7 8">Displays morphological abnormalities such as ballooning cells, intrahyphal hyphae and conidial scars (PubMed:11916702, PubMed:12480906, PubMed:12514801). Leads to sensitivity to the chitin-binding reagent Calcofluor white (CFW) (PubMed:12480906).</text>
</comment>
<comment type="similarity">
    <text evidence="11">Belongs to the chitin synthase family. Class V subfamily.</text>
</comment>
<protein>
    <recommendedName>
        <fullName evidence="10">Chitin synthase A</fullName>
        <ecNumber evidence="12">2.4.1.16</ecNumber>
    </recommendedName>
    <alternativeName>
        <fullName evidence="11">Chitin-UDP acetyl-glucosaminyl transferase A</fullName>
    </alternativeName>
    <alternativeName>
        <fullName evidence="10">Class-V chitin synthase A</fullName>
    </alternativeName>
</protein>
<keyword id="KW-1003">Cell membrane</keyword>
<keyword id="KW-0325">Glycoprotein</keyword>
<keyword id="KW-0328">Glycosyltransferase</keyword>
<keyword id="KW-0472">Membrane</keyword>
<keyword id="KW-1185">Reference proteome</keyword>
<keyword id="KW-0808">Transferase</keyword>
<keyword id="KW-0812">Transmembrane</keyword>
<keyword id="KW-1133">Transmembrane helix</keyword>
<accession>Q2UF72</accession>
<gene>
    <name evidence="10" type="primary">csmA</name>
    <name evidence="10" type="synonym">chsA</name>
    <name evidence="9" type="synonym">chsZ</name>
    <name type="ORF">AO090026000321</name>
</gene>
<sequence>MSNRYSVYSSHSAAFSTGGRAPQAGGQVSTTTLLNALHAHYTTGQPYQLDAGTSLVVNTLLTATQSSPEGHTGPTIDHELAVRAWEHARRRAEDGCIVLCSAHHSAPSILEPFLAALPLSTPSIAFTALAALRPFLTAVTTFNPSYSLYSALSACYNLTLKGDITGLSLALSTSGINVRKGFLDIPSEPGYRAFDVFYYLLTSASTPAEREFLDLRDASSYALLRKSGTYTPPSYLPTADDAAAAEDFRSALKAIGIKGASQRGLLSVLAGLLKLGNAAGFLVDQEDLEEACEDVGGLLGIDPEVLLHKCSTDDREVLISGIYEALVDWVIGKANEAIASQLQASLDDSSRGSGQAAQWTDDDTVSITVVDLPRPALGKAVAMRGIFDDTLGINAEMKDDGVVVPPAGPAVLNDMTAAIAQVEVDLGITTGPTWREREYELDKKHEVLEKVGLEVEMDSFLRQILFTAESEGITLGKKGRFDLATTLGSSRVWHHISIHPTDDLPENLSPGVPTAAWSAGAVSRQLREWRLAEWANRRLKQIDFTADFDIEEFIGRYFRLGCGEGKDGVENWLVERGWINGDAVVGHQRIWVRENAWWEAETMLDLKPEEPPAASPFMYGGGMLDPGVPHYAVPPIAESTSLLGSRDNLLNRQSTLVPSVAGGAKSIAPSAPHTLHTGGDYGLGTKGDDKKYDSHPYYDDEGRYLGELDPEYADPKHIEKKEITLGRRIWTGFVWALTFWIPSFVLRFVGRMKRPDVRMAWREKLVLVFLILLFNAIVCFYIIAFGNLLCPNKDKVWNEKEVSYHQGNNDFYVSIHGKVYDISKFWKIQHSDTSIETTTSNMEPFMGENLDAYFPPPLTRLCGDFVTDESITLRNNDTNAVLYSNAKHSCGPLQQTDPNTALHKITWYEDVFLPKIDEYYKGSLVWKRSEVSKQADSSSRYWVIKDESIYDLTDYFYTLKQMNNIDSYNFLPSSITELFKNYPGTDVTDKWPNSENATKAQTCLDYVFYKGKVDFRDSARCQVNNYILLAFTCLICAVILVKFLAALQLGSKRRPAPQDKFVICLVPAYTEGEDSLRKGLDSLTALQYDNKRKLIYVICDGMIVGGGNDRPTPKIVLDILGVDPKIDPPALPFKSIGQGSDQLNYGKVYSGLYEYEGNVVPYIVVVKVGKESEQSKSKPGNRGKRDSQIQIMNFLNRVHHRAPMSPLELEIFHQINNVIGVDPELYEYCLMVDADTSVREDSLNRLVAACANDARIAGICGETSLQNEERSWWTMIQVYEYYISHHLSKAFESLFGSVTCLPGCFCMYRLRTADKGRPLIISDKVIKEYADNDVDTLHKKNLLSLGEDRYLTTLMTKHFPTMSYKFIPDAYASTAAPETFSVLLSQRRRWINSTVHNLVELAALKDLCGFCCFSMRFVVLVDLLGTIILPATCVYLGYLIYSVASGGPIPIISIAILAGVYGLQAIIFIVKRQWQHIGWMIIYICAYPIYSFVLPMYSFWKQDDFSWGNTRVVLGEKGNKRVVAVEDEPFDPRSIPLQRWDDYALANNLPGRRGDYNMSQEKFYGGQYGDMGMEMDDMHSQYSSVKPASTILTGFPGAGRNGSPYMPPQSPAPFGGNTPGNRHSHLSSFSRYTDMPLQPGHQSRNLSVGNLSQFQDPSNRHSVGLMQSTDNLLGVPRPNSRSPVGGYTSRPQSAFDFRGSGGPDEMAITDAIRSCLAEVDLDTVTKKQVRALVEQRLQATLTGDKRAFLDRQIDQELANM</sequence>
<dbReference type="EC" id="2.4.1.16" evidence="12"/>
<dbReference type="EMBL" id="AP007159">
    <property type="protein sequence ID" value="BAE59793.1"/>
    <property type="molecule type" value="Genomic_DNA"/>
</dbReference>
<dbReference type="RefSeq" id="XP_001821795.1">
    <property type="nucleotide sequence ID" value="XM_001821743.2"/>
</dbReference>
<dbReference type="SMR" id="Q2UF72"/>
<dbReference type="STRING" id="510516.Q2UF72"/>
<dbReference type="CAZy" id="GT2">
    <property type="family name" value="Glycosyltransferase Family 2"/>
</dbReference>
<dbReference type="EnsemblFungi" id="BAE59793">
    <property type="protein sequence ID" value="BAE59793"/>
    <property type="gene ID" value="AO090026000321"/>
</dbReference>
<dbReference type="GeneID" id="5993823"/>
<dbReference type="KEGG" id="aor:AO090026000321"/>
<dbReference type="VEuPathDB" id="FungiDB:AO090026000321"/>
<dbReference type="HOGENOM" id="CLU_000192_0_0_1"/>
<dbReference type="OMA" id="RLAEWAN"/>
<dbReference type="OrthoDB" id="40156at5052"/>
<dbReference type="Proteomes" id="UP000006564">
    <property type="component" value="Chromosome 3"/>
</dbReference>
<dbReference type="GO" id="GO:0030428">
    <property type="term" value="C:cell septum"/>
    <property type="evidence" value="ECO:0007669"/>
    <property type="project" value="TreeGrafter"/>
</dbReference>
<dbReference type="GO" id="GO:0016459">
    <property type="term" value="C:myosin complex"/>
    <property type="evidence" value="ECO:0007669"/>
    <property type="project" value="InterPro"/>
</dbReference>
<dbReference type="GO" id="GO:0005886">
    <property type="term" value="C:plasma membrane"/>
    <property type="evidence" value="ECO:0007669"/>
    <property type="project" value="UniProtKB-SubCell"/>
</dbReference>
<dbReference type="GO" id="GO:0005524">
    <property type="term" value="F:ATP binding"/>
    <property type="evidence" value="ECO:0007669"/>
    <property type="project" value="InterPro"/>
</dbReference>
<dbReference type="GO" id="GO:0004100">
    <property type="term" value="F:chitin synthase activity"/>
    <property type="evidence" value="ECO:0007669"/>
    <property type="project" value="UniProtKB-EC"/>
</dbReference>
<dbReference type="GO" id="GO:0003774">
    <property type="term" value="F:cytoskeletal motor activity"/>
    <property type="evidence" value="ECO:0007669"/>
    <property type="project" value="InterPro"/>
</dbReference>
<dbReference type="GO" id="GO:0006031">
    <property type="term" value="P:chitin biosynthetic process"/>
    <property type="evidence" value="ECO:0007669"/>
    <property type="project" value="TreeGrafter"/>
</dbReference>
<dbReference type="GO" id="GO:0031505">
    <property type="term" value="P:fungal-type cell wall organization"/>
    <property type="evidence" value="ECO:0007669"/>
    <property type="project" value="TreeGrafter"/>
</dbReference>
<dbReference type="CDD" id="cd04190">
    <property type="entry name" value="Chitin_synth_C"/>
    <property type="match status" value="1"/>
</dbReference>
<dbReference type="FunFam" id="1.10.10.820:FF:000010">
    <property type="entry name" value="Chitin synthase 6"/>
    <property type="match status" value="1"/>
</dbReference>
<dbReference type="FunFam" id="3.10.120.10:FF:000014">
    <property type="entry name" value="Chitin synthase 6"/>
    <property type="match status" value="1"/>
</dbReference>
<dbReference type="Gene3D" id="1.10.10.820">
    <property type="match status" value="1"/>
</dbReference>
<dbReference type="Gene3D" id="3.10.120.10">
    <property type="entry name" value="Cytochrome b5-like heme/steroid binding domain"/>
    <property type="match status" value="1"/>
</dbReference>
<dbReference type="Gene3D" id="1.10.10.60">
    <property type="entry name" value="Homeodomain-like"/>
    <property type="match status" value="1"/>
</dbReference>
<dbReference type="InterPro" id="IPR004835">
    <property type="entry name" value="Chitin_synth"/>
</dbReference>
<dbReference type="InterPro" id="IPR001199">
    <property type="entry name" value="Cyt_B5-like_heme/steroid-bd"/>
</dbReference>
<dbReference type="InterPro" id="IPR036400">
    <property type="entry name" value="Cyt_B5-like_heme/steroid_sf"/>
</dbReference>
<dbReference type="InterPro" id="IPR014876">
    <property type="entry name" value="DEK_C"/>
</dbReference>
<dbReference type="InterPro" id="IPR001609">
    <property type="entry name" value="Myosin_head_motor_dom-like"/>
</dbReference>
<dbReference type="InterPro" id="IPR029044">
    <property type="entry name" value="Nucleotide-diphossugar_trans"/>
</dbReference>
<dbReference type="InterPro" id="IPR027417">
    <property type="entry name" value="P-loop_NTPase"/>
</dbReference>
<dbReference type="PANTHER" id="PTHR22914">
    <property type="entry name" value="CHITIN SYNTHASE"/>
    <property type="match status" value="1"/>
</dbReference>
<dbReference type="PANTHER" id="PTHR22914:SF13">
    <property type="entry name" value="CHITIN SYNTHASE"/>
    <property type="match status" value="1"/>
</dbReference>
<dbReference type="Pfam" id="PF03142">
    <property type="entry name" value="Chitin_synth_2"/>
    <property type="match status" value="1"/>
</dbReference>
<dbReference type="Pfam" id="PF00173">
    <property type="entry name" value="Cyt-b5"/>
    <property type="match status" value="1"/>
</dbReference>
<dbReference type="Pfam" id="PF08766">
    <property type="entry name" value="DEK_C"/>
    <property type="match status" value="1"/>
</dbReference>
<dbReference type="Pfam" id="PF00063">
    <property type="entry name" value="Myosin_head"/>
    <property type="match status" value="1"/>
</dbReference>
<dbReference type="SMART" id="SM01117">
    <property type="entry name" value="Cyt-b5"/>
    <property type="match status" value="2"/>
</dbReference>
<dbReference type="SMART" id="SM00242">
    <property type="entry name" value="MYSc"/>
    <property type="match status" value="1"/>
</dbReference>
<dbReference type="SUPFAM" id="SSF55856">
    <property type="entry name" value="Cytochrome b5-like heme/steroid binding domain"/>
    <property type="match status" value="1"/>
</dbReference>
<dbReference type="SUPFAM" id="SSF109715">
    <property type="entry name" value="DEK C-terminal domain"/>
    <property type="match status" value="1"/>
</dbReference>
<dbReference type="SUPFAM" id="SSF53448">
    <property type="entry name" value="Nucleotide-diphospho-sugar transferases"/>
    <property type="match status" value="1"/>
</dbReference>
<dbReference type="SUPFAM" id="SSF52540">
    <property type="entry name" value="P-loop containing nucleoside triphosphate hydrolases"/>
    <property type="match status" value="1"/>
</dbReference>
<dbReference type="PROSITE" id="PS51998">
    <property type="entry name" value="DEK_C"/>
    <property type="match status" value="1"/>
</dbReference>